<feature type="chain" id="PRO_0000217282" description="Photosystem II reaction center Psb28 protein">
    <location>
        <begin position="1"/>
        <end position="116"/>
    </location>
</feature>
<gene>
    <name evidence="1" type="primary">psb28</name>
    <name evidence="1" type="synonym">psbW</name>
    <name type="synonym">ycf79</name>
</gene>
<proteinExistence type="inferred from homology"/>
<dbReference type="EMBL" id="AF041468">
    <property type="protein sequence ID" value="AAC35603.1"/>
    <property type="molecule type" value="Genomic_DNA"/>
</dbReference>
<dbReference type="RefSeq" id="NP_050669.1">
    <property type="nucleotide sequence ID" value="NC_000926.1"/>
</dbReference>
<dbReference type="SMR" id="O78418"/>
<dbReference type="GeneID" id="856956"/>
<dbReference type="HOGENOM" id="CLU_137323_1_0_1"/>
<dbReference type="OMA" id="LEATYTW"/>
<dbReference type="GO" id="GO:0009535">
    <property type="term" value="C:chloroplast thylakoid membrane"/>
    <property type="evidence" value="ECO:0007669"/>
    <property type="project" value="UniProtKB-SubCell"/>
</dbReference>
<dbReference type="GO" id="GO:0009523">
    <property type="term" value="C:photosystem II"/>
    <property type="evidence" value="ECO:0007669"/>
    <property type="project" value="UniProtKB-KW"/>
</dbReference>
<dbReference type="GO" id="GO:0015979">
    <property type="term" value="P:photosynthesis"/>
    <property type="evidence" value="ECO:0007669"/>
    <property type="project" value="UniProtKB-UniRule"/>
</dbReference>
<dbReference type="Gene3D" id="2.40.30.220">
    <property type="entry name" value="Photosystem II Psb28"/>
    <property type="match status" value="1"/>
</dbReference>
<dbReference type="HAMAP" id="MF_01370">
    <property type="entry name" value="PSII_Psb28"/>
    <property type="match status" value="1"/>
</dbReference>
<dbReference type="InterPro" id="IPR038676">
    <property type="entry name" value="Psb28_c1_sf"/>
</dbReference>
<dbReference type="InterPro" id="IPR005610">
    <property type="entry name" value="PSII_Psb28_class-1"/>
</dbReference>
<dbReference type="NCBIfam" id="TIGR03047">
    <property type="entry name" value="PS_II_psb28"/>
    <property type="match status" value="1"/>
</dbReference>
<dbReference type="PANTHER" id="PTHR34963">
    <property type="match status" value="1"/>
</dbReference>
<dbReference type="PANTHER" id="PTHR34963:SF2">
    <property type="entry name" value="PHOTOSYSTEM II REACTION CENTER PSB28 PROTEIN, CHLOROPLASTIC"/>
    <property type="match status" value="1"/>
</dbReference>
<dbReference type="Pfam" id="PF03912">
    <property type="entry name" value="Psb28"/>
    <property type="match status" value="1"/>
</dbReference>
<organism>
    <name type="scientific">Guillardia theta</name>
    <name type="common">Cryptophyte</name>
    <name type="synonym">Cryptomonas phi</name>
    <dbReference type="NCBI Taxonomy" id="55529"/>
    <lineage>
        <taxon>Eukaryota</taxon>
        <taxon>Cryptophyceae</taxon>
        <taxon>Pyrenomonadales</taxon>
        <taxon>Geminigeraceae</taxon>
        <taxon>Guillardia</taxon>
    </lineage>
</organism>
<reference key="1">
    <citation type="journal article" date="1999" name="J. Mol. Evol.">
        <title>The plastid genome of the cryptophyte alga, Guillardia theta: complete sequence and conserved synteny groups confirm its common ancestry with red algae.</title>
        <authorList>
            <person name="Douglas S.E."/>
            <person name="Penny S.L."/>
        </authorList>
    </citation>
    <scope>NUCLEOTIDE SEQUENCE [LARGE SCALE GENOMIC DNA]</scope>
</reference>
<name>PSB28_GUITH</name>
<sequence length="116" mass="13118">MAVIQFIQGVNEDVIPDVRLTRSRDGSTGTATFRFANPKVLEAQSSVKGNITGMYLIDEEGQLVTRDVNARFVNGKPQGIEAVYIMQSKEDWDRFMRFMERYSEDNGLSFTKANNS</sequence>
<evidence type="ECO:0000255" key="1">
    <source>
        <dbReference type="HAMAP-Rule" id="MF_01370"/>
    </source>
</evidence>
<accession>O78418</accession>
<protein>
    <recommendedName>
        <fullName evidence="1">Photosystem II reaction center Psb28 protein</fullName>
    </recommendedName>
    <alternativeName>
        <fullName evidence="1">Photosystem II 13 kDa protein</fullName>
    </alternativeName>
    <alternativeName>
        <fullName evidence="1">Photosystem II reaction center W protein</fullName>
    </alternativeName>
</protein>
<comment type="subunit">
    <text evidence="1">Part of the photosystem II complex.</text>
</comment>
<comment type="subcellular location">
    <subcellularLocation>
        <location evidence="1">Plastid</location>
        <location evidence="1">Chloroplast thylakoid membrane</location>
        <topology evidence="1">Peripheral membrane protein</topology>
        <orientation evidence="1">Stromal side</orientation>
    </subcellularLocation>
</comment>
<comment type="similarity">
    <text evidence="1">Belongs to the Psb28 family.</text>
</comment>
<keyword id="KW-0150">Chloroplast</keyword>
<keyword id="KW-0472">Membrane</keyword>
<keyword id="KW-0602">Photosynthesis</keyword>
<keyword id="KW-0604">Photosystem II</keyword>
<keyword id="KW-0934">Plastid</keyword>
<keyword id="KW-0793">Thylakoid</keyword>
<geneLocation type="chloroplast"/>